<dbReference type="EC" id="2.1.1.-" evidence="2"/>
<dbReference type="EMBL" id="FO081521">
    <property type="protein sequence ID" value="CCD72180.1"/>
    <property type="molecule type" value="Genomic_DNA"/>
</dbReference>
<dbReference type="PIR" id="T33885">
    <property type="entry name" value="T33885"/>
</dbReference>
<dbReference type="RefSeq" id="NP_497549.2">
    <property type="nucleotide sequence ID" value="NM_065148.4"/>
</dbReference>
<dbReference type="SMR" id="Q9TYP1"/>
<dbReference type="FunCoup" id="Q9TYP1">
    <property type="interactions" value="1039"/>
</dbReference>
<dbReference type="STRING" id="6239.H14E04.1.1"/>
<dbReference type="SwissLipids" id="SLP:000000039"/>
<dbReference type="SwissLipids" id="SLP:000000218"/>
<dbReference type="PaxDb" id="6239-H14E04.1"/>
<dbReference type="PeptideAtlas" id="Q9TYP1"/>
<dbReference type="EnsemblMetazoa" id="H14E04.1.1">
    <property type="protein sequence ID" value="H14E04.1.1"/>
    <property type="gene ID" value="WBGene00019198"/>
</dbReference>
<dbReference type="GeneID" id="175358"/>
<dbReference type="KEGG" id="cel:CELE_H14E04.1"/>
<dbReference type="UCSC" id="H14E04.1">
    <property type="organism name" value="c. elegans"/>
</dbReference>
<dbReference type="AGR" id="WB:WBGene00019198"/>
<dbReference type="CTD" id="175358"/>
<dbReference type="WormBase" id="H14E04.1">
    <property type="protein sequence ID" value="CE29973"/>
    <property type="gene ID" value="WBGene00019198"/>
    <property type="gene designation" value="strm-1"/>
</dbReference>
<dbReference type="eggNOG" id="KOG1269">
    <property type="taxonomic scope" value="Eukaryota"/>
</dbReference>
<dbReference type="HOGENOM" id="CLU_840216_0_0_1"/>
<dbReference type="InParanoid" id="Q9TYP1"/>
<dbReference type="OMA" id="AFNKAMH"/>
<dbReference type="OrthoDB" id="8300214at2759"/>
<dbReference type="PhylomeDB" id="Q9TYP1"/>
<dbReference type="BRENDA" id="2.1.1.B118">
    <property type="organism ID" value="1045"/>
</dbReference>
<dbReference type="UniPathway" id="UPA01020"/>
<dbReference type="PRO" id="PR:Q9TYP1"/>
<dbReference type="Proteomes" id="UP000001940">
    <property type="component" value="Chromosome III"/>
</dbReference>
<dbReference type="Bgee" id="WBGene00019198">
    <property type="expression patterns" value="Expressed in embryo and 4 other cell types or tissues"/>
</dbReference>
<dbReference type="GO" id="GO:0005783">
    <property type="term" value="C:endoplasmic reticulum"/>
    <property type="evidence" value="ECO:0000318"/>
    <property type="project" value="GO_Central"/>
</dbReference>
<dbReference type="GO" id="GO:0008757">
    <property type="term" value="F:S-adenosylmethionine-dependent methyltransferase activity"/>
    <property type="evidence" value="ECO:0000315"/>
    <property type="project" value="WormBase"/>
</dbReference>
<dbReference type="GO" id="GO:0003838">
    <property type="term" value="F:sterol 24-C-methyltransferase activity"/>
    <property type="evidence" value="ECO:0000318"/>
    <property type="project" value="GO_Central"/>
</dbReference>
<dbReference type="GO" id="GO:0008203">
    <property type="term" value="P:cholesterol metabolic process"/>
    <property type="evidence" value="ECO:0007669"/>
    <property type="project" value="UniProtKB-KW"/>
</dbReference>
<dbReference type="GO" id="GO:0032259">
    <property type="term" value="P:methylation"/>
    <property type="evidence" value="ECO:0007669"/>
    <property type="project" value="UniProtKB-KW"/>
</dbReference>
<dbReference type="GO" id="GO:0061065">
    <property type="term" value="P:regulation of dauer larval development"/>
    <property type="evidence" value="ECO:0000315"/>
    <property type="project" value="WormBase"/>
</dbReference>
<dbReference type="GO" id="GO:0016126">
    <property type="term" value="P:sterol biosynthetic process"/>
    <property type="evidence" value="ECO:0000318"/>
    <property type="project" value="GO_Central"/>
</dbReference>
<dbReference type="CDD" id="cd02440">
    <property type="entry name" value="AdoMet_MTases"/>
    <property type="match status" value="1"/>
</dbReference>
<dbReference type="FunFam" id="3.40.50.150:FF:000348">
    <property type="entry name" value="S-adenosyl-methionine-sterol-C-methyltransferas (AFU_orthologue AFUA_4G09190)"/>
    <property type="match status" value="1"/>
</dbReference>
<dbReference type="Gene3D" id="3.40.50.150">
    <property type="entry name" value="Vaccinia Virus protein VP39"/>
    <property type="match status" value="1"/>
</dbReference>
<dbReference type="InterPro" id="IPR050447">
    <property type="entry name" value="Erg6_SMT_methyltransf"/>
</dbReference>
<dbReference type="InterPro" id="IPR020803">
    <property type="entry name" value="MeTfrase_dom"/>
</dbReference>
<dbReference type="InterPro" id="IPR013216">
    <property type="entry name" value="Methyltransf_11"/>
</dbReference>
<dbReference type="InterPro" id="IPR030384">
    <property type="entry name" value="MeTrfase_SMT"/>
</dbReference>
<dbReference type="InterPro" id="IPR029063">
    <property type="entry name" value="SAM-dependent_MTases_sf"/>
</dbReference>
<dbReference type="PANTHER" id="PTHR44068:SF1">
    <property type="entry name" value="HYPOTHETICAL LOC100005854"/>
    <property type="match status" value="1"/>
</dbReference>
<dbReference type="PANTHER" id="PTHR44068">
    <property type="entry name" value="ZGC:194242"/>
    <property type="match status" value="1"/>
</dbReference>
<dbReference type="Pfam" id="PF08241">
    <property type="entry name" value="Methyltransf_11"/>
    <property type="match status" value="1"/>
</dbReference>
<dbReference type="SMART" id="SM00828">
    <property type="entry name" value="PKS_MT"/>
    <property type="match status" value="1"/>
</dbReference>
<dbReference type="SUPFAM" id="SSF53335">
    <property type="entry name" value="S-adenosyl-L-methionine-dependent methyltransferases"/>
    <property type="match status" value="1"/>
</dbReference>
<dbReference type="PROSITE" id="PS51685">
    <property type="entry name" value="SAM_MT_ERG6_SMT"/>
    <property type="match status" value="1"/>
</dbReference>
<keyword id="KW-0153">Cholesterol metabolism</keyword>
<keyword id="KW-0443">Lipid metabolism</keyword>
<keyword id="KW-0489">Methyltransferase</keyword>
<keyword id="KW-1185">Reference proteome</keyword>
<keyword id="KW-0949">S-adenosyl-L-methionine</keyword>
<keyword id="KW-0753">Steroid metabolism</keyword>
<keyword id="KW-1207">Sterol metabolism</keyword>
<keyword id="KW-0808">Transferase</keyword>
<protein>
    <recommendedName>
        <fullName>Sterol 4-C-methyltransferase strm-1</fullName>
        <shortName evidence="4">STRM-1</shortName>
        <ecNumber evidence="2">2.1.1.-</ecNumber>
    </recommendedName>
    <alternativeName>
        <fullName evidence="4">Sterol A-ring methylase-1</fullName>
    </alternativeName>
</protein>
<proteinExistence type="evidence at protein level"/>
<accession>Q9TYP1</accession>
<evidence type="ECO:0000255" key="1">
    <source>
        <dbReference type="PROSITE-ProRule" id="PRU01022"/>
    </source>
</evidence>
<evidence type="ECO:0000269" key="2">
    <source>
    </source>
</evidence>
<evidence type="ECO:0000269" key="3">
    <source>
    </source>
</evidence>
<evidence type="ECO:0000303" key="4">
    <source>
    </source>
</evidence>
<organism>
    <name type="scientific">Caenorhabditis elegans</name>
    <dbReference type="NCBI Taxonomy" id="6239"/>
    <lineage>
        <taxon>Eukaryota</taxon>
        <taxon>Metazoa</taxon>
        <taxon>Ecdysozoa</taxon>
        <taxon>Nematoda</taxon>
        <taxon>Chromadorea</taxon>
        <taxon>Rhabditida</taxon>
        <taxon>Rhabditina</taxon>
        <taxon>Rhabditomorpha</taxon>
        <taxon>Rhabditoidea</taxon>
        <taxon>Rhabditidae</taxon>
        <taxon>Peloderinae</taxon>
        <taxon>Caenorhabditis</taxon>
    </lineage>
</organism>
<name>STRM1_CAEEL</name>
<gene>
    <name type="primary">strm-1</name>
    <name type="ORF">H14E04.1</name>
</gene>
<comment type="function">
    <text evidence="2 3">Catalyzes the methyl transfer from S-adenosyl-methionine to the C-4 of the A-ring sterols such as lathosterone (5alpha-cholest-7-en-3-one) thereby rendering them unsuitable as ligand precursors. May irreversibly shunt sterols away from hormone dafachronic acid production. Dafachronic acids act as ligands and bind directly to the nuclear hormone receptor (NHR) daf-12 suppressing dauer formation and inducing reproductive growth. By reducing the biosynthesis of dafachronic acids, this methyltransferase can regulate dauer larva formation.</text>
</comment>
<comment type="catalytic activity">
    <reaction evidence="2">
        <text>5alpha-cholest-7-en-3-one + S-adenosyl-L-methionine = 4alpha-methyl-5alpha-cholest-7-en-3-one + S-adenosyl-L-homocysteine + H(+)</text>
        <dbReference type="Rhea" id="RHEA:35483"/>
        <dbReference type="ChEBI" id="CHEBI:15378"/>
        <dbReference type="ChEBI" id="CHEBI:16495"/>
        <dbReference type="ChEBI" id="CHEBI:57856"/>
        <dbReference type="ChEBI" id="CHEBI:59789"/>
        <dbReference type="ChEBI" id="CHEBI:71550"/>
    </reaction>
    <physiologicalReaction direction="left-to-right" evidence="2">
        <dbReference type="Rhea" id="RHEA:35484"/>
    </physiologicalReaction>
</comment>
<comment type="pathway">
    <text evidence="2 3">Steroid hormone biosynthesis; dafachronic acid biosynthesis.</text>
</comment>
<comment type="tissue specificity">
    <text evidence="2">Expressed in the pharynx and hypodermal syncytium.</text>
</comment>
<comment type="disruption phenotype">
    <text evidence="2">Mutants show impaired dauer larvae production.</text>
</comment>
<comment type="similarity">
    <text evidence="1">Belongs to the class I-like SAM-binding methyltransferase superfamily. Erg6/SMT family.</text>
</comment>
<feature type="chain" id="PRO_0000421681" description="Sterol 4-C-methyltransferase strm-1">
    <location>
        <begin position="1"/>
        <end position="334"/>
    </location>
</feature>
<sequence>MSINMNANFLKLLTHFRRHDLTNFKSEHDTLYEKALETGDHLEVTSHYYSVMSTVIDEYFGGNFHFVPPKFEGQKLEEALKSLHCHIAEKLELSENVHCLDIGCGIGGVMLDIADFGAKLTGVTIAPNEAEIGNEKFANMGISDRCKIVAADCQKMPFEDSTFDVAYAIYSLKYIPNLDKVMKEIQRVLKPGGKFIVYDLIKTNDYDKDNKEHYKTLHHLEYACGMPSLHTQSEVEAAAEKWEMPVVERENLEETYGNRAFHYCFSASPMFMWLVSSPVIDHTIRMAEILRILPAGFKQFNRTFLCGTVNSIVGGGRMGILSGADILLFEKKKI</sequence>
<reference key="1">
    <citation type="journal article" date="1998" name="Science">
        <title>Genome sequence of the nematode C. elegans: a platform for investigating biology.</title>
        <authorList>
            <consortium name="The C. elegans sequencing consortium"/>
        </authorList>
    </citation>
    <scope>NUCLEOTIDE SEQUENCE [LARGE SCALE GENOMIC DNA]</scope>
    <source>
        <strain>Bristol N2</strain>
    </source>
</reference>
<reference key="2">
    <citation type="journal article" date="2009" name="Dev. Cell">
        <title>Methylation of the sterol nucleus by STRM-1 regulates dauer larva formation in Caenorhabditis elegans.</title>
        <authorList>
            <person name="Hannich J.T."/>
            <person name="Entchev E.V."/>
            <person name="Mende F."/>
            <person name="Boytchev H."/>
            <person name="Martin R."/>
            <person name="Zagoriy V."/>
            <person name="Theumer G."/>
            <person name="Riezman I."/>
            <person name="Riezman H."/>
            <person name="Knolker H.J."/>
            <person name="Kurzchalia T.V."/>
        </authorList>
    </citation>
    <scope>FUNCTION</scope>
    <scope>CATALYTIC ACTIVITY</scope>
    <scope>TISSUE SPECIFICITY</scope>
    <scope>DISRUPTION PHENOTYPE</scope>
    <scope>PATHWAY</scope>
</reference>
<reference key="3">
    <citation type="journal article" date="2014" name="Cell Metab.">
        <title>Comparative metabolomics reveals endogenous ligands of DAF-12, a nuclear hormone receptor, regulating C. elegans development and lifespan.</title>
        <authorList>
            <person name="Mahanti P."/>
            <person name="Bose N."/>
            <person name="Bethke A."/>
            <person name="Judkins J.C."/>
            <person name="Wollam J."/>
            <person name="Dumas K.J."/>
            <person name="Zimmerman A.M."/>
            <person name="Campbell S.L."/>
            <person name="Hu P.J."/>
            <person name="Antebi A."/>
            <person name="Schroeder F.C."/>
        </authorList>
    </citation>
    <scope>FUNCTION</scope>
    <scope>PATHWAY</scope>
</reference>